<sequence>MIVSIPDVLSPAEAAAMRAQLEASDAWVDGRATAGYQGAPVKRNQQIGEGSPIALEMGDRIVASLERHPLFISAALPNKVYPPLFNRYEGGMHFGSHVDGAIRLVPGSGARVRTDVSVTLFLTPPDEYDGGELLIEDTFGVQEVKLPAGHAIVYPGTSLHQVRPVTRGARVASFFWVQSLVRDDTQRAMLFDLDGAIQRLNASNGDEAARRTLVGCYHNLLRMWSDT</sequence>
<accession>B2JNF0</accession>
<feature type="chain" id="PRO_1000131205" description="PKHD-type hydroxylase Bphy_5374">
    <location>
        <begin position="1"/>
        <end position="227"/>
    </location>
</feature>
<feature type="domain" description="Fe2OG dioxygenase" evidence="1">
    <location>
        <begin position="79"/>
        <end position="179"/>
    </location>
</feature>
<feature type="binding site" evidence="1">
    <location>
        <position position="97"/>
    </location>
    <ligand>
        <name>Fe cation</name>
        <dbReference type="ChEBI" id="CHEBI:24875"/>
    </ligand>
</feature>
<feature type="binding site" evidence="1">
    <location>
        <position position="99"/>
    </location>
    <ligand>
        <name>Fe cation</name>
        <dbReference type="ChEBI" id="CHEBI:24875"/>
    </ligand>
</feature>
<feature type="binding site" evidence="1">
    <location>
        <position position="160"/>
    </location>
    <ligand>
        <name>Fe cation</name>
        <dbReference type="ChEBI" id="CHEBI:24875"/>
    </ligand>
</feature>
<feature type="binding site" evidence="1">
    <location>
        <position position="170"/>
    </location>
    <ligand>
        <name>2-oxoglutarate</name>
        <dbReference type="ChEBI" id="CHEBI:16810"/>
    </ligand>
</feature>
<dbReference type="EC" id="1.14.11.-" evidence="1"/>
<dbReference type="EMBL" id="CP001044">
    <property type="protein sequence ID" value="ACC74452.1"/>
    <property type="molecule type" value="Genomic_DNA"/>
</dbReference>
<dbReference type="RefSeq" id="WP_012404616.1">
    <property type="nucleotide sequence ID" value="NC_010623.1"/>
</dbReference>
<dbReference type="SMR" id="B2JNF0"/>
<dbReference type="STRING" id="391038.Bphy_5374"/>
<dbReference type="KEGG" id="bph:Bphy_5374"/>
<dbReference type="eggNOG" id="COG3128">
    <property type="taxonomic scope" value="Bacteria"/>
</dbReference>
<dbReference type="HOGENOM" id="CLU_106663_0_0_4"/>
<dbReference type="OrthoDB" id="9812472at2"/>
<dbReference type="Proteomes" id="UP000001192">
    <property type="component" value="Chromosome 2"/>
</dbReference>
<dbReference type="GO" id="GO:0016706">
    <property type="term" value="F:2-oxoglutarate-dependent dioxygenase activity"/>
    <property type="evidence" value="ECO:0007669"/>
    <property type="project" value="UniProtKB-UniRule"/>
</dbReference>
<dbReference type="GO" id="GO:0005506">
    <property type="term" value="F:iron ion binding"/>
    <property type="evidence" value="ECO:0007669"/>
    <property type="project" value="UniProtKB-UniRule"/>
</dbReference>
<dbReference type="GO" id="GO:0031418">
    <property type="term" value="F:L-ascorbic acid binding"/>
    <property type="evidence" value="ECO:0007669"/>
    <property type="project" value="UniProtKB-KW"/>
</dbReference>
<dbReference type="GO" id="GO:0006974">
    <property type="term" value="P:DNA damage response"/>
    <property type="evidence" value="ECO:0007669"/>
    <property type="project" value="TreeGrafter"/>
</dbReference>
<dbReference type="GO" id="GO:0006879">
    <property type="term" value="P:intracellular iron ion homeostasis"/>
    <property type="evidence" value="ECO:0007669"/>
    <property type="project" value="TreeGrafter"/>
</dbReference>
<dbReference type="Gene3D" id="2.60.120.620">
    <property type="entry name" value="q2cbj1_9rhob like domain"/>
    <property type="match status" value="1"/>
</dbReference>
<dbReference type="Gene3D" id="4.10.860.20">
    <property type="entry name" value="Rabenosyn, Rab binding domain"/>
    <property type="match status" value="1"/>
</dbReference>
<dbReference type="HAMAP" id="MF_00657">
    <property type="entry name" value="Hydroxyl_YbiX"/>
    <property type="match status" value="1"/>
</dbReference>
<dbReference type="InterPro" id="IPR005123">
    <property type="entry name" value="Oxoglu/Fe-dep_dioxygenase_dom"/>
</dbReference>
<dbReference type="InterPro" id="IPR041097">
    <property type="entry name" value="PKHD_C"/>
</dbReference>
<dbReference type="InterPro" id="IPR023550">
    <property type="entry name" value="PKHD_hydroxylase"/>
</dbReference>
<dbReference type="InterPro" id="IPR006620">
    <property type="entry name" value="Pro_4_hyd_alph"/>
</dbReference>
<dbReference type="InterPro" id="IPR044862">
    <property type="entry name" value="Pro_4_hyd_alph_FE2OG_OXY"/>
</dbReference>
<dbReference type="NCBIfam" id="NF003974">
    <property type="entry name" value="PRK05467.1-3"/>
    <property type="match status" value="1"/>
</dbReference>
<dbReference type="NCBIfam" id="NF003975">
    <property type="entry name" value="PRK05467.1-4"/>
    <property type="match status" value="1"/>
</dbReference>
<dbReference type="PANTHER" id="PTHR41536">
    <property type="entry name" value="PKHD-TYPE HYDROXYLASE YBIX"/>
    <property type="match status" value="1"/>
</dbReference>
<dbReference type="PANTHER" id="PTHR41536:SF1">
    <property type="entry name" value="PKHD-TYPE HYDROXYLASE YBIX"/>
    <property type="match status" value="1"/>
</dbReference>
<dbReference type="Pfam" id="PF13640">
    <property type="entry name" value="2OG-FeII_Oxy_3"/>
    <property type="match status" value="1"/>
</dbReference>
<dbReference type="Pfam" id="PF18331">
    <property type="entry name" value="PKHD_C"/>
    <property type="match status" value="1"/>
</dbReference>
<dbReference type="SMART" id="SM00702">
    <property type="entry name" value="P4Hc"/>
    <property type="match status" value="1"/>
</dbReference>
<dbReference type="SUPFAM" id="SSF51197">
    <property type="entry name" value="Clavaminate synthase-like"/>
    <property type="match status" value="1"/>
</dbReference>
<dbReference type="PROSITE" id="PS51471">
    <property type="entry name" value="FE2OG_OXY"/>
    <property type="match status" value="1"/>
</dbReference>
<keyword id="KW-0223">Dioxygenase</keyword>
<keyword id="KW-0408">Iron</keyword>
<keyword id="KW-0479">Metal-binding</keyword>
<keyword id="KW-0560">Oxidoreductase</keyword>
<keyword id="KW-1185">Reference proteome</keyword>
<keyword id="KW-0847">Vitamin C</keyword>
<organism>
    <name type="scientific">Paraburkholderia phymatum (strain DSM 17167 / CIP 108236 / LMG 21445 / STM815)</name>
    <name type="common">Burkholderia phymatum</name>
    <dbReference type="NCBI Taxonomy" id="391038"/>
    <lineage>
        <taxon>Bacteria</taxon>
        <taxon>Pseudomonadati</taxon>
        <taxon>Pseudomonadota</taxon>
        <taxon>Betaproteobacteria</taxon>
        <taxon>Burkholderiales</taxon>
        <taxon>Burkholderiaceae</taxon>
        <taxon>Paraburkholderia</taxon>
    </lineage>
</organism>
<name>Y5374_PARP8</name>
<evidence type="ECO:0000255" key="1">
    <source>
        <dbReference type="HAMAP-Rule" id="MF_00657"/>
    </source>
</evidence>
<protein>
    <recommendedName>
        <fullName evidence="1">PKHD-type hydroxylase Bphy_5374</fullName>
        <ecNumber evidence="1">1.14.11.-</ecNumber>
    </recommendedName>
</protein>
<proteinExistence type="inferred from homology"/>
<gene>
    <name type="ordered locus">Bphy_5374</name>
</gene>
<comment type="cofactor">
    <cofactor evidence="1">
        <name>Fe(2+)</name>
        <dbReference type="ChEBI" id="CHEBI:29033"/>
    </cofactor>
    <text evidence="1">Binds 1 Fe(2+) ion per subunit.</text>
</comment>
<comment type="cofactor">
    <cofactor evidence="1">
        <name>L-ascorbate</name>
        <dbReference type="ChEBI" id="CHEBI:38290"/>
    </cofactor>
</comment>
<reference key="1">
    <citation type="journal article" date="2014" name="Stand. Genomic Sci.">
        <title>Complete genome sequence of Burkholderia phymatum STM815(T), a broad host range and efficient nitrogen-fixing symbiont of Mimosa species.</title>
        <authorList>
            <person name="Moulin L."/>
            <person name="Klonowska A."/>
            <person name="Caroline B."/>
            <person name="Booth K."/>
            <person name="Vriezen J.A."/>
            <person name="Melkonian R."/>
            <person name="James E.K."/>
            <person name="Young J.P."/>
            <person name="Bena G."/>
            <person name="Hauser L."/>
            <person name="Land M."/>
            <person name="Kyrpides N."/>
            <person name="Bruce D."/>
            <person name="Chain P."/>
            <person name="Copeland A."/>
            <person name="Pitluck S."/>
            <person name="Woyke T."/>
            <person name="Lizotte-Waniewski M."/>
            <person name="Bristow J."/>
            <person name="Riley M."/>
        </authorList>
    </citation>
    <scope>NUCLEOTIDE SEQUENCE [LARGE SCALE GENOMIC DNA]</scope>
    <source>
        <strain>DSM 17167 / CIP 108236 / LMG 21445 / STM815</strain>
    </source>
</reference>